<keyword id="KW-0158">Chromosome</keyword>
<keyword id="KW-0217">Developmental protein</keyword>
<keyword id="KW-0221">Differentiation</keyword>
<keyword id="KW-0903">Direct protein sequencing</keyword>
<keyword id="KW-0226">DNA condensation</keyword>
<keyword id="KW-0238">DNA-binding</keyword>
<keyword id="KW-0544">Nucleosome core</keyword>
<keyword id="KW-0539">Nucleus</keyword>
<keyword id="KW-0744">Spermatogenesis</keyword>
<comment type="function">
    <text evidence="2">Protamines substitute for histones in the chromatin of sperm during the haploid phase of spermatogenesis. They compact sperm DNA into a highly condensed, stable and inactive complex.</text>
</comment>
<comment type="subcellular location">
    <subcellularLocation>
        <location evidence="2">Nucleus</location>
    </subcellularLocation>
    <subcellularLocation>
        <location evidence="2">Chromosome</location>
    </subcellularLocation>
</comment>
<comment type="tissue specificity">
    <text evidence="2">Testis.</text>
</comment>
<comment type="mass spectrometry"/>
<comment type="miscellaneous">
    <text evidence="2">Two isoforms exist, a major form and a minor form. This is the major form.</text>
</comment>
<feature type="chain" id="PRO_0000106627" description="Sperm protamine R3 isoform 1">
    <location>
        <begin position="1"/>
        <end position="48"/>
    </location>
</feature>
<feature type="region of interest" description="Disordered" evidence="1">
    <location>
        <begin position="1"/>
        <end position="48"/>
    </location>
</feature>
<feature type="compositionally biased region" description="Basic residues" evidence="1">
    <location>
        <begin position="1"/>
        <end position="29"/>
    </location>
</feature>
<dbReference type="SMR" id="P83266"/>
<dbReference type="GO" id="GO:0000228">
    <property type="term" value="C:nuclear chromosome"/>
    <property type="evidence" value="ECO:0007669"/>
    <property type="project" value="InterPro"/>
</dbReference>
<dbReference type="GO" id="GO:0000786">
    <property type="term" value="C:nucleosome"/>
    <property type="evidence" value="ECO:0000304"/>
    <property type="project" value="UniProtKB"/>
</dbReference>
<dbReference type="GO" id="GO:0005634">
    <property type="term" value="C:nucleus"/>
    <property type="evidence" value="ECO:0000304"/>
    <property type="project" value="UniProtKB"/>
</dbReference>
<dbReference type="GO" id="GO:0003677">
    <property type="term" value="F:DNA binding"/>
    <property type="evidence" value="ECO:0000304"/>
    <property type="project" value="UniProtKB"/>
</dbReference>
<dbReference type="GO" id="GO:0007076">
    <property type="term" value="P:mitotic chromosome condensation"/>
    <property type="evidence" value="ECO:0000304"/>
    <property type="project" value="UniProtKB"/>
</dbReference>
<dbReference type="GO" id="GO:0006334">
    <property type="term" value="P:nucleosome assembly"/>
    <property type="evidence" value="ECO:0000304"/>
    <property type="project" value="UniProtKB"/>
</dbReference>
<dbReference type="GO" id="GO:0035092">
    <property type="term" value="P:sperm DNA condensation"/>
    <property type="evidence" value="ECO:0007669"/>
    <property type="project" value="InterPro"/>
</dbReference>
<dbReference type="GO" id="GO:0007283">
    <property type="term" value="P:spermatogenesis"/>
    <property type="evidence" value="ECO:0000304"/>
    <property type="project" value="UniProtKB"/>
</dbReference>
<dbReference type="InterPro" id="IPR012601">
    <property type="entry name" value="Spermatozal_protamine_typ"/>
</dbReference>
<dbReference type="Pfam" id="PF08188">
    <property type="entry name" value="Protamine_3"/>
    <property type="match status" value="1"/>
</dbReference>
<sequence>ARRRHSMKKKRKSVRRRKTRKNQRKRKNSLGRSFKQHGFLKQPPRFRP</sequence>
<protein>
    <recommendedName>
        <fullName>Sperm protamine R3 isoform 1</fullName>
    </recommendedName>
</protein>
<evidence type="ECO:0000256" key="1">
    <source>
        <dbReference type="SAM" id="MobiDB-lite"/>
    </source>
</evidence>
<evidence type="ECO:0000269" key="2">
    <source>
    </source>
</evidence>
<evidence type="ECO:0000305" key="3"/>
<organism evidence="3">
    <name type="scientific">Hydrolagus colliei</name>
    <name type="common">Spotted ratfish</name>
    <name type="synonym">Chimaera colliei</name>
    <dbReference type="NCBI Taxonomy" id="7873"/>
    <lineage>
        <taxon>Eukaryota</taxon>
        <taxon>Metazoa</taxon>
        <taxon>Chordata</taxon>
        <taxon>Craniata</taxon>
        <taxon>Vertebrata</taxon>
        <taxon>Chondrichthyes</taxon>
        <taxon>Holocephali</taxon>
        <taxon>Chimaeriformes</taxon>
        <taxon>Chimaeridae</taxon>
        <taxon>Hydrolagus</taxon>
    </lineage>
</organism>
<proteinExistence type="evidence at protein level"/>
<name>PRT31_HYDCO</name>
<reference evidence="3" key="1">
    <citation type="journal article" date="1996" name="J. Mol. Evol.">
        <title>The primary structure of a chondrichthyan protamine: a new apparent contradiction in protamine evolution.</title>
        <authorList>
            <person name="Saperas N."/>
            <person name="Buesa C."/>
            <person name="Abian J."/>
            <person name="Vandekerckhove J."/>
            <person name="Kasinsky H.E."/>
            <person name="Chiva M."/>
        </authorList>
    </citation>
    <scope>PROTEIN SEQUENCE</scope>
    <scope>FUNCTION</scope>
    <scope>SUBCELLULAR LOCATION</scope>
    <scope>TISSUE SPECIFICITY</scope>
    <scope>MASS SPECTROMETRY</scope>
    <source>
        <tissue>Sperm</tissue>
    </source>
</reference>
<accession>P83266</accession>